<comment type="function">
    <text evidence="1">The heterodimer acts as both an ATP-dependent DNA helicase and an ATP-dependent, dual-direction single-stranded exonuclease. Recognizes the chi site generating a DNA molecule suitable for the initiation of homologous recombination. The AddA nuclease domain is required for chi fragment generation; this subunit has the helicase and 3' -&gt; 5' nuclease activities.</text>
</comment>
<comment type="catalytic activity">
    <reaction evidence="1">
        <text>Couples ATP hydrolysis with the unwinding of duplex DNA by translocating in the 3'-5' direction.</text>
        <dbReference type="EC" id="5.6.2.4"/>
    </reaction>
</comment>
<comment type="catalytic activity">
    <reaction evidence="1">
        <text>ATP + H2O = ADP + phosphate + H(+)</text>
        <dbReference type="Rhea" id="RHEA:13065"/>
        <dbReference type="ChEBI" id="CHEBI:15377"/>
        <dbReference type="ChEBI" id="CHEBI:15378"/>
        <dbReference type="ChEBI" id="CHEBI:30616"/>
        <dbReference type="ChEBI" id="CHEBI:43474"/>
        <dbReference type="ChEBI" id="CHEBI:456216"/>
        <dbReference type="EC" id="5.6.2.4"/>
    </reaction>
</comment>
<comment type="cofactor">
    <cofactor evidence="1">
        <name>Mg(2+)</name>
        <dbReference type="ChEBI" id="CHEBI:18420"/>
    </cofactor>
</comment>
<comment type="subunit">
    <text evidence="1">Heterodimer of AddA and AddB/RexB.</text>
</comment>
<comment type="similarity">
    <text evidence="1">Belongs to the helicase family. AddA subfamily.</text>
</comment>
<organism>
    <name type="scientific">Desulforudis audaxviator (strain MP104C)</name>
    <dbReference type="NCBI Taxonomy" id="477974"/>
    <lineage>
        <taxon>Bacteria</taxon>
        <taxon>Bacillati</taxon>
        <taxon>Bacillota</taxon>
        <taxon>Clostridia</taxon>
        <taxon>Thermoanaerobacterales</taxon>
        <taxon>Candidatus Desulforudaceae</taxon>
        <taxon>Candidatus Desulforudis</taxon>
    </lineage>
</organism>
<reference key="1">
    <citation type="submission" date="2007-10" db="EMBL/GenBank/DDBJ databases">
        <title>Complete sequence of chromosome of Desulforudis audaxviator MP104C.</title>
        <authorList>
            <person name="Copeland A."/>
            <person name="Lucas S."/>
            <person name="Lapidus A."/>
            <person name="Barry K."/>
            <person name="Glavina del Rio T."/>
            <person name="Dalin E."/>
            <person name="Tice H."/>
            <person name="Bruce D."/>
            <person name="Pitluck S."/>
            <person name="Lowry S.R."/>
            <person name="Larimer F."/>
            <person name="Land M.L."/>
            <person name="Hauser L."/>
            <person name="Kyrpides N."/>
            <person name="Ivanova N.N."/>
            <person name="Richardson P."/>
        </authorList>
    </citation>
    <scope>NUCLEOTIDE SEQUENCE [LARGE SCALE GENOMIC DNA]</scope>
    <source>
        <strain>MP104C</strain>
    </source>
</reference>
<sequence>MSSRNWTGPQEAAIGCREKNLLVAAGAGSGKTAVLVERVIRRISDPAAPVDVDRLLVVTFTNAAAAEMRKRVAEALERELEKHPGMPLLEHQLRLLPQADITTIHSFCAELLRRYHYLIDLDPEFRVADETEAAILRQETLEEFFEEQYRVITGDPDLEFLVEAYGGERDDLKLQNLVSGLHRFARSNPWPEAWLARAAAFGADPQGLDGDGPLAWGLRDLVGTGLEAAVFELRAALEAAKAPGGPAVYADALAAEVEGTARLAGLVAGDWEPLRAAFLAFGFTPRLPAARAGVDQELKDLCSRCRKKAKERIQNLKETFFARRPEELLSEMAALGPAMRRLAALAADFGEAYRTAKLARNLVDFADLEHYCLQILLAPGSTPEAPVPSPVAAGLREYYVEVLVDEYQDINAVQETILRLVSRQDAAAPNLFMVGDVKQSIYRFRLAEPALFLEKYRAFDTGEDAGGARRIDLSHNFRSRESIIHAVNAVFRRIMTPAVGELAYDTAAELVCGGTPAQLEGSGPPVEVHLLGAPTSVGRDTAGTADDEPDRSDEADLTAVQREARLVAGIIRRLAGLGGECTVPYRDIVVLMRATTGKAGTYLEEFRRQNIPAYAKVGTGYFEAVEVETVLSLLKVIDNPHQDIPLAGVLRSPLVGLGAAELAAVRLADKEGDFFRAVVAAAGQGGRLGAVLAGFLERLEKWRSQARCGSLADLIWDVYRTTGYYDYVGGLPGGAGRQANLRALYDRARQYEATAFRGLFRFLRFIELLQEGGQDLGPAPALAESENVVRIMSIHQAKGLEFPVVILADMGRRFYMPDLNGEVLLHKDLGLGPYFVDPGARVSHPTAAWHVVRERLRREQLAEEMRILYVAMTRARERLILTGSAGRLEQAVLRWSHAAAGDGETLPVPVLAEAESFLDWVMPVLMAHPDGEPLRRLAVRSRPAAGTPKDRSRWEVHLHRPEDLEEAAGADPDTAAVLESLRRLAPIPADGGLDEAVHRALSWHYPWSALASCGAKISATEVKRRFAAAAAGEEEVPAVFPYRAPPARPAFLETARGLSPQAFGRAMHVVLQHLDLAGDLSVDGIRAQVAGLEEREFLTATEARAIDAEKLAGLFAGGLGRRLAGALWVRREWPFCLVVPAHEIYPGLEGHPEERVMVQGIIDCLFAEPDGLVLVDYKTDRVGPGGEAALADRYRGQLDLYARAVEAVLRRRVKERYLFLVMTGSAQIIQ</sequence>
<gene>
    <name evidence="1" type="primary">addA</name>
    <name type="ordered locus">Daud_1276</name>
</gene>
<accession>B1I493</accession>
<dbReference type="EC" id="3.1.-.-" evidence="1"/>
<dbReference type="EC" id="5.6.2.4" evidence="1"/>
<dbReference type="EMBL" id="CP000860">
    <property type="protein sequence ID" value="ACA59787.1"/>
    <property type="molecule type" value="Genomic_DNA"/>
</dbReference>
<dbReference type="RefSeq" id="WP_012302372.1">
    <property type="nucleotide sequence ID" value="NC_010424.1"/>
</dbReference>
<dbReference type="SMR" id="B1I493"/>
<dbReference type="STRING" id="477974.Daud_1276"/>
<dbReference type="KEGG" id="dau:Daud_1276"/>
<dbReference type="eggNOG" id="COG1074">
    <property type="taxonomic scope" value="Bacteria"/>
</dbReference>
<dbReference type="HOGENOM" id="CLU_001114_3_1_9"/>
<dbReference type="OrthoDB" id="9810135at2"/>
<dbReference type="Proteomes" id="UP000008544">
    <property type="component" value="Chromosome"/>
</dbReference>
<dbReference type="GO" id="GO:0005829">
    <property type="term" value="C:cytosol"/>
    <property type="evidence" value="ECO:0007669"/>
    <property type="project" value="TreeGrafter"/>
</dbReference>
<dbReference type="GO" id="GO:0033202">
    <property type="term" value="C:DNA helicase complex"/>
    <property type="evidence" value="ECO:0007669"/>
    <property type="project" value="TreeGrafter"/>
</dbReference>
<dbReference type="GO" id="GO:0043138">
    <property type="term" value="F:3'-5' DNA helicase activity"/>
    <property type="evidence" value="ECO:0007669"/>
    <property type="project" value="UniProtKB-UniRule"/>
</dbReference>
<dbReference type="GO" id="GO:0008408">
    <property type="term" value="F:3'-5' exonuclease activity"/>
    <property type="evidence" value="ECO:0007669"/>
    <property type="project" value="UniProtKB-UniRule"/>
</dbReference>
<dbReference type="GO" id="GO:0005524">
    <property type="term" value="F:ATP binding"/>
    <property type="evidence" value="ECO:0007669"/>
    <property type="project" value="UniProtKB-UniRule"/>
</dbReference>
<dbReference type="GO" id="GO:0016887">
    <property type="term" value="F:ATP hydrolysis activity"/>
    <property type="evidence" value="ECO:0007669"/>
    <property type="project" value="RHEA"/>
</dbReference>
<dbReference type="GO" id="GO:0003690">
    <property type="term" value="F:double-stranded DNA binding"/>
    <property type="evidence" value="ECO:0007669"/>
    <property type="project" value="UniProtKB-UniRule"/>
</dbReference>
<dbReference type="GO" id="GO:0000724">
    <property type="term" value="P:double-strand break repair via homologous recombination"/>
    <property type="evidence" value="ECO:0007669"/>
    <property type="project" value="UniProtKB-UniRule"/>
</dbReference>
<dbReference type="CDD" id="cd17932">
    <property type="entry name" value="DEXQc_UvrD"/>
    <property type="match status" value="1"/>
</dbReference>
<dbReference type="FunFam" id="3.40.50.300:FF:001236">
    <property type="entry name" value="ATP-dependent helicase/nuclease subunit A"/>
    <property type="match status" value="1"/>
</dbReference>
<dbReference type="Gene3D" id="3.90.320.10">
    <property type="match status" value="1"/>
</dbReference>
<dbReference type="Gene3D" id="3.40.50.300">
    <property type="entry name" value="P-loop containing nucleotide triphosphate hydrolases"/>
    <property type="match status" value="4"/>
</dbReference>
<dbReference type="Gene3D" id="1.10.486.10">
    <property type="entry name" value="PCRA, domain 4"/>
    <property type="match status" value="1"/>
</dbReference>
<dbReference type="HAMAP" id="MF_01451">
    <property type="entry name" value="AddA"/>
    <property type="match status" value="1"/>
</dbReference>
<dbReference type="InterPro" id="IPR014152">
    <property type="entry name" value="AddA"/>
</dbReference>
<dbReference type="InterPro" id="IPR014017">
    <property type="entry name" value="DNA_helicase_UvrD-like_C"/>
</dbReference>
<dbReference type="InterPro" id="IPR000212">
    <property type="entry name" value="DNA_helicase_UvrD/REP"/>
</dbReference>
<dbReference type="InterPro" id="IPR027417">
    <property type="entry name" value="P-loop_NTPase"/>
</dbReference>
<dbReference type="InterPro" id="IPR011604">
    <property type="entry name" value="PDDEXK-like_dom_sf"/>
</dbReference>
<dbReference type="InterPro" id="IPR038726">
    <property type="entry name" value="PDDEXK_AddAB-type"/>
</dbReference>
<dbReference type="InterPro" id="IPR011335">
    <property type="entry name" value="Restrct_endonuc-II-like"/>
</dbReference>
<dbReference type="InterPro" id="IPR014016">
    <property type="entry name" value="UvrD-like_ATP-bd"/>
</dbReference>
<dbReference type="NCBIfam" id="TIGR02785">
    <property type="entry name" value="addA_Gpos"/>
    <property type="match status" value="1"/>
</dbReference>
<dbReference type="PANTHER" id="PTHR11070:SF48">
    <property type="entry name" value="ATP-DEPENDENT HELICASE_NUCLEASE SUBUNIT A"/>
    <property type="match status" value="1"/>
</dbReference>
<dbReference type="PANTHER" id="PTHR11070">
    <property type="entry name" value="UVRD / RECB / PCRA DNA HELICASE FAMILY MEMBER"/>
    <property type="match status" value="1"/>
</dbReference>
<dbReference type="Pfam" id="PF12705">
    <property type="entry name" value="PDDEXK_1"/>
    <property type="match status" value="1"/>
</dbReference>
<dbReference type="Pfam" id="PF00580">
    <property type="entry name" value="UvrD-helicase"/>
    <property type="match status" value="1"/>
</dbReference>
<dbReference type="Pfam" id="PF13361">
    <property type="entry name" value="UvrD_C"/>
    <property type="match status" value="2"/>
</dbReference>
<dbReference type="SUPFAM" id="SSF52540">
    <property type="entry name" value="P-loop containing nucleoside triphosphate hydrolases"/>
    <property type="match status" value="1"/>
</dbReference>
<dbReference type="SUPFAM" id="SSF52980">
    <property type="entry name" value="Restriction endonuclease-like"/>
    <property type="match status" value="1"/>
</dbReference>
<dbReference type="PROSITE" id="PS51198">
    <property type="entry name" value="UVRD_HELICASE_ATP_BIND"/>
    <property type="match status" value="1"/>
</dbReference>
<dbReference type="PROSITE" id="PS51217">
    <property type="entry name" value="UVRD_HELICASE_CTER"/>
    <property type="match status" value="1"/>
</dbReference>
<protein>
    <recommendedName>
        <fullName evidence="1">ATP-dependent helicase/nuclease subunit A</fullName>
        <ecNumber evidence="1">3.1.-.-</ecNumber>
        <ecNumber evidence="1">5.6.2.4</ecNumber>
    </recommendedName>
    <alternativeName>
        <fullName evidence="1">ATP-dependent helicase/nuclease AddA</fullName>
    </alternativeName>
    <alternativeName>
        <fullName evidence="1">DNA 3'-5' helicase AddA</fullName>
    </alternativeName>
</protein>
<evidence type="ECO:0000255" key="1">
    <source>
        <dbReference type="HAMAP-Rule" id="MF_01451"/>
    </source>
</evidence>
<evidence type="ECO:0000256" key="2">
    <source>
        <dbReference type="SAM" id="MobiDB-lite"/>
    </source>
</evidence>
<name>ADDA_DESAP</name>
<keyword id="KW-0067">ATP-binding</keyword>
<keyword id="KW-0227">DNA damage</keyword>
<keyword id="KW-0234">DNA repair</keyword>
<keyword id="KW-0238">DNA-binding</keyword>
<keyword id="KW-0269">Exonuclease</keyword>
<keyword id="KW-0347">Helicase</keyword>
<keyword id="KW-0378">Hydrolase</keyword>
<keyword id="KW-0413">Isomerase</keyword>
<keyword id="KW-0540">Nuclease</keyword>
<keyword id="KW-0547">Nucleotide-binding</keyword>
<keyword id="KW-1185">Reference proteome</keyword>
<proteinExistence type="inferred from homology"/>
<feature type="chain" id="PRO_0000379268" description="ATP-dependent helicase/nuclease subunit A">
    <location>
        <begin position="1"/>
        <end position="1230"/>
    </location>
</feature>
<feature type="domain" description="UvrD-like helicase ATP-binding" evidence="1">
    <location>
        <begin position="4"/>
        <end position="480"/>
    </location>
</feature>
<feature type="domain" description="UvrD-like helicase C-terminal" evidence="1">
    <location>
        <begin position="517"/>
        <end position="799"/>
    </location>
</feature>
<feature type="region of interest" description="Disordered" evidence="2">
    <location>
        <begin position="535"/>
        <end position="554"/>
    </location>
</feature>
<feature type="compositionally biased region" description="Acidic residues" evidence="2">
    <location>
        <begin position="545"/>
        <end position="554"/>
    </location>
</feature>
<feature type="binding site" evidence="1">
    <location>
        <begin position="25"/>
        <end position="32"/>
    </location>
    <ligand>
        <name>ATP</name>
        <dbReference type="ChEBI" id="CHEBI:30616"/>
    </ligand>
</feature>